<gene>
    <name evidence="1" type="primary">folD</name>
</gene>
<reference key="1">
    <citation type="journal article" date="2001" name="Eur. J. Biochem.">
        <title>Organization of the genes involved in dimethylglycine and sarcosine degradation in Arthrobacter spp.: implications for glycine betaine catabolism.</title>
        <authorList>
            <person name="Meskys R."/>
            <person name="Harris R.J."/>
            <person name="Casaite V."/>
            <person name="Basran J."/>
            <person name="Scrutton N.S."/>
        </authorList>
    </citation>
    <scope>NUCLEOTIDE SEQUENCE [GENOMIC DNA]</scope>
    <source>
        <strain>NRRL B-2979</strain>
    </source>
</reference>
<keyword id="KW-0028">Amino-acid biosynthesis</keyword>
<keyword id="KW-0368">Histidine biosynthesis</keyword>
<keyword id="KW-0378">Hydrolase</keyword>
<keyword id="KW-0486">Methionine biosynthesis</keyword>
<keyword id="KW-0511">Multifunctional enzyme</keyword>
<keyword id="KW-0521">NADP</keyword>
<keyword id="KW-0554">One-carbon metabolism</keyword>
<keyword id="KW-0560">Oxidoreductase</keyword>
<keyword id="KW-0658">Purine biosynthesis</keyword>
<comment type="function">
    <text evidence="1">Catalyzes the oxidation of 5,10-methylenetetrahydrofolate to 5,10-methenyltetrahydrofolate and then the hydrolysis of 5,10-methenyltetrahydrofolate to 10-formyltetrahydrofolate.</text>
</comment>
<comment type="catalytic activity">
    <reaction evidence="1">
        <text>(6R)-5,10-methylene-5,6,7,8-tetrahydrofolate + NADP(+) = (6R)-5,10-methenyltetrahydrofolate + NADPH</text>
        <dbReference type="Rhea" id="RHEA:22812"/>
        <dbReference type="ChEBI" id="CHEBI:15636"/>
        <dbReference type="ChEBI" id="CHEBI:57455"/>
        <dbReference type="ChEBI" id="CHEBI:57783"/>
        <dbReference type="ChEBI" id="CHEBI:58349"/>
        <dbReference type="EC" id="1.5.1.5"/>
    </reaction>
</comment>
<comment type="catalytic activity">
    <reaction evidence="1">
        <text>(6R)-5,10-methenyltetrahydrofolate + H2O = (6R)-10-formyltetrahydrofolate + H(+)</text>
        <dbReference type="Rhea" id="RHEA:23700"/>
        <dbReference type="ChEBI" id="CHEBI:15377"/>
        <dbReference type="ChEBI" id="CHEBI:15378"/>
        <dbReference type="ChEBI" id="CHEBI:57455"/>
        <dbReference type="ChEBI" id="CHEBI:195366"/>
        <dbReference type="EC" id="3.5.4.9"/>
    </reaction>
</comment>
<comment type="pathway">
    <text evidence="1">One-carbon metabolism; tetrahydrofolate interconversion.</text>
</comment>
<comment type="subunit">
    <text evidence="1">Homodimer.</text>
</comment>
<comment type="similarity">
    <text evidence="1">Belongs to the tetrahydrofolate dehydrogenase/cyclohydrolase family.</text>
</comment>
<name>FOLD_ARTGO</name>
<proteinExistence type="inferred from homology"/>
<evidence type="ECO:0000255" key="1">
    <source>
        <dbReference type="HAMAP-Rule" id="MF_01576"/>
    </source>
</evidence>
<dbReference type="EC" id="1.5.1.5" evidence="1"/>
<dbReference type="EC" id="3.5.4.9" evidence="1"/>
<dbReference type="EMBL" id="AF329477">
    <property type="protein sequence ID" value="AAK16484.1"/>
    <property type="molecule type" value="Genomic_DNA"/>
</dbReference>
<dbReference type="SMR" id="Q9AGP6"/>
<dbReference type="UniPathway" id="UPA00193"/>
<dbReference type="GO" id="GO:0005829">
    <property type="term" value="C:cytosol"/>
    <property type="evidence" value="ECO:0007669"/>
    <property type="project" value="TreeGrafter"/>
</dbReference>
<dbReference type="GO" id="GO:0004477">
    <property type="term" value="F:methenyltetrahydrofolate cyclohydrolase activity"/>
    <property type="evidence" value="ECO:0007669"/>
    <property type="project" value="UniProtKB-UniRule"/>
</dbReference>
<dbReference type="GO" id="GO:0004488">
    <property type="term" value="F:methylenetetrahydrofolate dehydrogenase (NADP+) activity"/>
    <property type="evidence" value="ECO:0007669"/>
    <property type="project" value="UniProtKB-UniRule"/>
</dbReference>
<dbReference type="GO" id="GO:0000105">
    <property type="term" value="P:L-histidine biosynthetic process"/>
    <property type="evidence" value="ECO:0007669"/>
    <property type="project" value="UniProtKB-KW"/>
</dbReference>
<dbReference type="GO" id="GO:0009086">
    <property type="term" value="P:methionine biosynthetic process"/>
    <property type="evidence" value="ECO:0007669"/>
    <property type="project" value="UniProtKB-KW"/>
</dbReference>
<dbReference type="GO" id="GO:0006164">
    <property type="term" value="P:purine nucleotide biosynthetic process"/>
    <property type="evidence" value="ECO:0007669"/>
    <property type="project" value="UniProtKB-KW"/>
</dbReference>
<dbReference type="GO" id="GO:0035999">
    <property type="term" value="P:tetrahydrofolate interconversion"/>
    <property type="evidence" value="ECO:0007669"/>
    <property type="project" value="UniProtKB-UniRule"/>
</dbReference>
<dbReference type="CDD" id="cd01080">
    <property type="entry name" value="NAD_bind_m-THF_DH_Cyclohyd"/>
    <property type="match status" value="1"/>
</dbReference>
<dbReference type="Gene3D" id="3.40.50.10860">
    <property type="entry name" value="Leucine Dehydrogenase, chain A, domain 1"/>
    <property type="match status" value="1"/>
</dbReference>
<dbReference type="Gene3D" id="3.40.50.720">
    <property type="entry name" value="NAD(P)-binding Rossmann-like Domain"/>
    <property type="match status" value="1"/>
</dbReference>
<dbReference type="HAMAP" id="MF_01576">
    <property type="entry name" value="THF_DHG_CYH"/>
    <property type="match status" value="1"/>
</dbReference>
<dbReference type="InterPro" id="IPR046346">
    <property type="entry name" value="Aminoacid_DH-like_N_sf"/>
</dbReference>
<dbReference type="InterPro" id="IPR036291">
    <property type="entry name" value="NAD(P)-bd_dom_sf"/>
</dbReference>
<dbReference type="InterPro" id="IPR000672">
    <property type="entry name" value="THF_DH/CycHdrlase"/>
</dbReference>
<dbReference type="InterPro" id="IPR020630">
    <property type="entry name" value="THF_DH/CycHdrlase_cat_dom"/>
</dbReference>
<dbReference type="InterPro" id="IPR020631">
    <property type="entry name" value="THF_DH/CycHdrlase_NAD-bd_dom"/>
</dbReference>
<dbReference type="PANTHER" id="PTHR48099:SF5">
    <property type="entry name" value="C-1-TETRAHYDROFOLATE SYNTHASE, CYTOPLASMIC"/>
    <property type="match status" value="1"/>
</dbReference>
<dbReference type="PANTHER" id="PTHR48099">
    <property type="entry name" value="C-1-TETRAHYDROFOLATE SYNTHASE, CYTOPLASMIC-RELATED"/>
    <property type="match status" value="1"/>
</dbReference>
<dbReference type="Pfam" id="PF00763">
    <property type="entry name" value="THF_DHG_CYH"/>
    <property type="match status" value="1"/>
</dbReference>
<dbReference type="Pfam" id="PF02882">
    <property type="entry name" value="THF_DHG_CYH_C"/>
    <property type="match status" value="1"/>
</dbReference>
<dbReference type="PRINTS" id="PR00085">
    <property type="entry name" value="THFDHDRGNASE"/>
</dbReference>
<dbReference type="SUPFAM" id="SSF53223">
    <property type="entry name" value="Aminoacid dehydrogenase-like, N-terminal domain"/>
    <property type="match status" value="1"/>
</dbReference>
<dbReference type="SUPFAM" id="SSF51735">
    <property type="entry name" value="NAD(P)-binding Rossmann-fold domains"/>
    <property type="match status" value="1"/>
</dbReference>
<feature type="chain" id="PRO_0000268263" description="Bifunctional protein FolD">
    <location>
        <begin position="1"/>
        <end position="292"/>
    </location>
</feature>
<feature type="binding site" evidence="1">
    <location>
        <begin position="165"/>
        <end position="167"/>
    </location>
    <ligand>
        <name>NADP(+)</name>
        <dbReference type="ChEBI" id="CHEBI:58349"/>
    </ligand>
</feature>
<feature type="binding site" evidence="1">
    <location>
        <position position="190"/>
    </location>
    <ligand>
        <name>NADP(+)</name>
        <dbReference type="ChEBI" id="CHEBI:58349"/>
    </ligand>
</feature>
<feature type="binding site" evidence="1">
    <location>
        <position position="231"/>
    </location>
    <ligand>
        <name>NADP(+)</name>
        <dbReference type="ChEBI" id="CHEBI:58349"/>
    </ligand>
</feature>
<sequence>MTASLLSGKPLAKLIQQQAQTEAKVLAEEGTCPTLAVVVATEDSSTHWYVRSIERAAEAAGINCRIIDVGHDATEQVLIAVLKDLSAELSVNGIILQTPLPPGVRTQELVKYIAPEKDIDGANPLSLGLLAVGERAFAPATARAVVEILDHFEIPVAGRNVVVVGRSTVVGKPLSLLLLQKDATTTVCHSKSGALGTYTKTADVVVVAAGRTGLLTGADVSEHSVVIDVGTNVLSDGSLTGDVDEASVRPVAAALTPVPGGVGSVTTALLLLHTAEAAREQSRATSAPVLTR</sequence>
<accession>Q9AGP6</accession>
<protein>
    <recommendedName>
        <fullName evidence="1">Bifunctional protein FolD</fullName>
    </recommendedName>
    <domain>
        <recommendedName>
            <fullName evidence="1">Methylenetetrahydrofolate dehydrogenase</fullName>
            <ecNumber evidence="1">1.5.1.5</ecNumber>
        </recommendedName>
    </domain>
    <domain>
        <recommendedName>
            <fullName evidence="1">Methenyltetrahydrofolate cyclohydrolase</fullName>
            <ecNumber evidence="1">3.5.4.9</ecNumber>
        </recommendedName>
    </domain>
</protein>
<organism>
    <name type="scientific">Arthrobacter globiformis</name>
    <dbReference type="NCBI Taxonomy" id="1665"/>
    <lineage>
        <taxon>Bacteria</taxon>
        <taxon>Bacillati</taxon>
        <taxon>Actinomycetota</taxon>
        <taxon>Actinomycetes</taxon>
        <taxon>Micrococcales</taxon>
        <taxon>Micrococcaceae</taxon>
        <taxon>Arthrobacter</taxon>
    </lineage>
</organism>